<accession>Q68XU6</accession>
<dbReference type="EC" id="1.7.1.13" evidence="1"/>
<dbReference type="EMBL" id="AE017197">
    <property type="protein sequence ID" value="AAU03546.1"/>
    <property type="molecule type" value="Genomic_DNA"/>
</dbReference>
<dbReference type="RefSeq" id="WP_011190533.1">
    <property type="nucleotide sequence ID" value="NC_006142.1"/>
</dbReference>
<dbReference type="SMR" id="Q68XU6"/>
<dbReference type="KEGG" id="rty:RT0060"/>
<dbReference type="eggNOG" id="COG0780">
    <property type="taxonomic scope" value="Bacteria"/>
</dbReference>
<dbReference type="eggNOG" id="COG2904">
    <property type="taxonomic scope" value="Bacteria"/>
</dbReference>
<dbReference type="HOGENOM" id="CLU_054738_0_0_5"/>
<dbReference type="OrthoDB" id="9789995at2"/>
<dbReference type="UniPathway" id="UPA00392"/>
<dbReference type="Proteomes" id="UP000000604">
    <property type="component" value="Chromosome"/>
</dbReference>
<dbReference type="GO" id="GO:0005737">
    <property type="term" value="C:cytoplasm"/>
    <property type="evidence" value="ECO:0007669"/>
    <property type="project" value="UniProtKB-SubCell"/>
</dbReference>
<dbReference type="GO" id="GO:0033739">
    <property type="term" value="F:preQ1 synthase activity"/>
    <property type="evidence" value="ECO:0007669"/>
    <property type="project" value="UniProtKB-UniRule"/>
</dbReference>
<dbReference type="GO" id="GO:0008616">
    <property type="term" value="P:queuosine biosynthetic process"/>
    <property type="evidence" value="ECO:0007669"/>
    <property type="project" value="UniProtKB-UniRule"/>
</dbReference>
<dbReference type="GO" id="GO:0006400">
    <property type="term" value="P:tRNA modification"/>
    <property type="evidence" value="ECO:0007669"/>
    <property type="project" value="UniProtKB-UniRule"/>
</dbReference>
<dbReference type="Gene3D" id="3.30.1130.10">
    <property type="match status" value="2"/>
</dbReference>
<dbReference type="HAMAP" id="MF_00817">
    <property type="entry name" value="QueF_type2"/>
    <property type="match status" value="1"/>
</dbReference>
<dbReference type="InterPro" id="IPR043133">
    <property type="entry name" value="GTP-CH-I_C/QueF"/>
</dbReference>
<dbReference type="InterPro" id="IPR050084">
    <property type="entry name" value="NADPH_dep_7-cyano-7-deazaG_red"/>
</dbReference>
<dbReference type="InterPro" id="IPR029500">
    <property type="entry name" value="QueF"/>
</dbReference>
<dbReference type="InterPro" id="IPR029139">
    <property type="entry name" value="QueF_N"/>
</dbReference>
<dbReference type="InterPro" id="IPR016428">
    <property type="entry name" value="QueF_type2"/>
</dbReference>
<dbReference type="NCBIfam" id="TIGR03138">
    <property type="entry name" value="QueF"/>
    <property type="match status" value="1"/>
</dbReference>
<dbReference type="PANTHER" id="PTHR34354">
    <property type="entry name" value="NADPH-DEPENDENT 7-CYANO-7-DEAZAGUANINE REDUCTASE"/>
    <property type="match status" value="1"/>
</dbReference>
<dbReference type="PANTHER" id="PTHR34354:SF1">
    <property type="entry name" value="NADPH-DEPENDENT 7-CYANO-7-DEAZAGUANINE REDUCTASE"/>
    <property type="match status" value="1"/>
</dbReference>
<dbReference type="Pfam" id="PF14489">
    <property type="entry name" value="QueF"/>
    <property type="match status" value="1"/>
</dbReference>
<dbReference type="Pfam" id="PF14819">
    <property type="entry name" value="QueF_N"/>
    <property type="match status" value="1"/>
</dbReference>
<dbReference type="PIRSF" id="PIRSF004750">
    <property type="entry name" value="Nitrile_oxidored_YqcD_prd"/>
    <property type="match status" value="1"/>
</dbReference>
<dbReference type="SUPFAM" id="SSF55620">
    <property type="entry name" value="Tetrahydrobiopterin biosynthesis enzymes-like"/>
    <property type="match status" value="1"/>
</dbReference>
<comment type="function">
    <text evidence="1">Catalyzes the NADPH-dependent reduction of 7-cyano-7-deazaguanine (preQ0) to 7-aminomethyl-7-deazaguanine (preQ1).</text>
</comment>
<comment type="catalytic activity">
    <reaction evidence="1">
        <text>7-aminomethyl-7-carbaguanine + 2 NADP(+) = 7-cyano-7-deazaguanine + 2 NADPH + 3 H(+)</text>
        <dbReference type="Rhea" id="RHEA:13409"/>
        <dbReference type="ChEBI" id="CHEBI:15378"/>
        <dbReference type="ChEBI" id="CHEBI:45075"/>
        <dbReference type="ChEBI" id="CHEBI:57783"/>
        <dbReference type="ChEBI" id="CHEBI:58349"/>
        <dbReference type="ChEBI" id="CHEBI:58703"/>
        <dbReference type="EC" id="1.7.1.13"/>
    </reaction>
</comment>
<comment type="pathway">
    <text evidence="1">tRNA modification; tRNA-queuosine biosynthesis.</text>
</comment>
<comment type="subunit">
    <text evidence="1">Homodimer.</text>
</comment>
<comment type="subcellular location">
    <subcellularLocation>
        <location evidence="1">Cytoplasm</location>
    </subcellularLocation>
</comment>
<comment type="similarity">
    <text evidence="1">Belongs to the GTP cyclohydrolase I family. QueF type 2 subfamily.</text>
</comment>
<organism>
    <name type="scientific">Rickettsia typhi (strain ATCC VR-144 / Wilmington)</name>
    <dbReference type="NCBI Taxonomy" id="257363"/>
    <lineage>
        <taxon>Bacteria</taxon>
        <taxon>Pseudomonadati</taxon>
        <taxon>Pseudomonadota</taxon>
        <taxon>Alphaproteobacteria</taxon>
        <taxon>Rickettsiales</taxon>
        <taxon>Rickettsiaceae</taxon>
        <taxon>Rickettsieae</taxon>
        <taxon>Rickettsia</taxon>
        <taxon>typhus group</taxon>
    </lineage>
</organism>
<proteinExistence type="inferred from homology"/>
<feature type="chain" id="PRO_0000163055" description="NADPH-dependent 7-cyano-7-deazaguanine reductase">
    <location>
        <begin position="1"/>
        <end position="272"/>
    </location>
</feature>
<feature type="active site" description="Thioimide intermediate" evidence="1">
    <location>
        <position position="178"/>
    </location>
</feature>
<feature type="active site" description="Proton donor" evidence="1">
    <location>
        <position position="185"/>
    </location>
</feature>
<feature type="binding site" evidence="1">
    <location>
        <begin position="80"/>
        <end position="82"/>
    </location>
    <ligand>
        <name>substrate</name>
    </ligand>
</feature>
<feature type="binding site" evidence="1">
    <location>
        <begin position="82"/>
        <end position="83"/>
    </location>
    <ligand>
        <name>NADPH</name>
        <dbReference type="ChEBI" id="CHEBI:57783"/>
    </ligand>
</feature>
<feature type="binding site" evidence="1">
    <location>
        <begin position="217"/>
        <end position="218"/>
    </location>
    <ligand>
        <name>substrate</name>
    </ligand>
</feature>
<feature type="binding site" evidence="1">
    <location>
        <begin position="246"/>
        <end position="247"/>
    </location>
    <ligand>
        <name>NADPH</name>
        <dbReference type="ChEBI" id="CHEBI:57783"/>
    </ligand>
</feature>
<keyword id="KW-0963">Cytoplasm</keyword>
<keyword id="KW-0521">NADP</keyword>
<keyword id="KW-0560">Oxidoreductase</keyword>
<keyword id="KW-0671">Queuosine biosynthesis</keyword>
<reference key="1">
    <citation type="journal article" date="2004" name="J. Bacteriol.">
        <title>Complete genome sequence of Rickettsia typhi and comparison with sequences of other Rickettsiae.</title>
        <authorList>
            <person name="McLeod M.P."/>
            <person name="Qin X."/>
            <person name="Karpathy S.E."/>
            <person name="Gioia J."/>
            <person name="Highlander S.K."/>
            <person name="Fox G.E."/>
            <person name="McNeill T.Z."/>
            <person name="Jiang H."/>
            <person name="Muzny D."/>
            <person name="Jacob L.S."/>
            <person name="Hawes A.C."/>
            <person name="Sodergren E."/>
            <person name="Gill R."/>
            <person name="Hume J."/>
            <person name="Morgan M."/>
            <person name="Fan G."/>
            <person name="Amin A.G."/>
            <person name="Gibbs R.A."/>
            <person name="Hong C."/>
            <person name="Yu X.-J."/>
            <person name="Walker D.H."/>
            <person name="Weinstock G.M."/>
        </authorList>
    </citation>
    <scope>NUCLEOTIDE SEQUENCE [LARGE SCALE GENOMIC DNA]</scope>
    <source>
        <strain>ATCC VR-144 / Wilmington</strain>
    </source>
</reference>
<evidence type="ECO:0000255" key="1">
    <source>
        <dbReference type="HAMAP-Rule" id="MF_00817"/>
    </source>
</evidence>
<sequence length="272" mass="31096">MPLSTSLLGKKSTYKDSYDATLLFKIPRINNRNVLGINNNLPFYGVDIWNTYEISCLNKNGKPLVGIGTFYIPADSENIVESKSFKLYLNSFNNFIVKSIEELEQIILQDLSNVTCAKVTGRIFPINTKIEFGIPSGKNIDNLDIVCNNYGPPDNSLIEYEDVLVEEEIHSNLLKSNCLVTGQPDWGTIVIKYKGKKLKYDSFLRYLISFRNCNEFAEQCAERIFIDIKNAINLDFLSIYIVYTRRGGIDICPYRSTDKSYALPSNKRFIRQ</sequence>
<gene>
    <name evidence="1" type="primary">queF</name>
    <name type="ordered locus">RT0060</name>
</gene>
<protein>
    <recommendedName>
        <fullName evidence="1">NADPH-dependent 7-cyano-7-deazaguanine reductase</fullName>
        <ecNumber evidence="1">1.7.1.13</ecNumber>
    </recommendedName>
    <alternativeName>
        <fullName evidence="1">7-cyano-7-carbaguanine reductase</fullName>
    </alternativeName>
    <alternativeName>
        <fullName evidence="1">NADPH-dependent nitrile oxidoreductase</fullName>
    </alternativeName>
    <alternativeName>
        <fullName evidence="1">PreQ(0) reductase</fullName>
    </alternativeName>
</protein>
<name>QUEF_RICTY</name>